<evidence type="ECO:0000255" key="1">
    <source>
        <dbReference type="HAMAP-Rule" id="MF_00735"/>
    </source>
</evidence>
<accession>Q319D4</accession>
<protein>
    <recommendedName>
        <fullName evidence="1">Ribosomal protein L11 methyltransferase</fullName>
        <shortName evidence="1">L11 Mtase</shortName>
        <ecNumber evidence="1">2.1.1.-</ecNumber>
    </recommendedName>
</protein>
<keyword id="KW-0963">Cytoplasm</keyword>
<keyword id="KW-0489">Methyltransferase</keyword>
<keyword id="KW-0949">S-adenosyl-L-methionine</keyword>
<keyword id="KW-0808">Transferase</keyword>
<proteinExistence type="inferred from homology"/>
<organism>
    <name type="scientific">Prochlorococcus marinus (strain MIT 9312)</name>
    <dbReference type="NCBI Taxonomy" id="74546"/>
    <lineage>
        <taxon>Bacteria</taxon>
        <taxon>Bacillati</taxon>
        <taxon>Cyanobacteriota</taxon>
        <taxon>Cyanophyceae</taxon>
        <taxon>Synechococcales</taxon>
        <taxon>Prochlorococcaceae</taxon>
        <taxon>Prochlorococcus</taxon>
    </lineage>
</organism>
<reference key="1">
    <citation type="journal article" date="2006" name="Science">
        <title>Genomic islands and the ecology and evolution of Prochlorococcus.</title>
        <authorList>
            <person name="Coleman M.L."/>
            <person name="Sullivan M.B."/>
            <person name="Martiny A.C."/>
            <person name="Steglich C."/>
            <person name="Barry K."/>
            <person name="Delong E.F."/>
            <person name="Chisholm S.W."/>
        </authorList>
    </citation>
    <scope>NUCLEOTIDE SEQUENCE [LARGE SCALE GENOMIC DNA]</scope>
    <source>
        <strain>MIT 9312</strain>
    </source>
</reference>
<dbReference type="EC" id="2.1.1.-" evidence="1"/>
<dbReference type="EMBL" id="CP000111">
    <property type="protein sequence ID" value="ABB50511.1"/>
    <property type="molecule type" value="Genomic_DNA"/>
</dbReference>
<dbReference type="RefSeq" id="WP_011376995.1">
    <property type="nucleotide sequence ID" value="NC_007577.1"/>
</dbReference>
<dbReference type="SMR" id="Q319D4"/>
<dbReference type="STRING" id="74546.PMT9312_1451"/>
<dbReference type="KEGG" id="pmi:PMT9312_1451"/>
<dbReference type="eggNOG" id="COG2264">
    <property type="taxonomic scope" value="Bacteria"/>
</dbReference>
<dbReference type="HOGENOM" id="CLU_049382_0_1_3"/>
<dbReference type="OrthoDB" id="9785995at2"/>
<dbReference type="Proteomes" id="UP000002715">
    <property type="component" value="Chromosome"/>
</dbReference>
<dbReference type="GO" id="GO:0005737">
    <property type="term" value="C:cytoplasm"/>
    <property type="evidence" value="ECO:0007669"/>
    <property type="project" value="UniProtKB-SubCell"/>
</dbReference>
<dbReference type="GO" id="GO:0016279">
    <property type="term" value="F:protein-lysine N-methyltransferase activity"/>
    <property type="evidence" value="ECO:0007669"/>
    <property type="project" value="RHEA"/>
</dbReference>
<dbReference type="GO" id="GO:0032259">
    <property type="term" value="P:methylation"/>
    <property type="evidence" value="ECO:0007669"/>
    <property type="project" value="UniProtKB-KW"/>
</dbReference>
<dbReference type="CDD" id="cd02440">
    <property type="entry name" value="AdoMet_MTases"/>
    <property type="match status" value="1"/>
</dbReference>
<dbReference type="Gene3D" id="3.40.50.150">
    <property type="entry name" value="Vaccinia Virus protein VP39"/>
    <property type="match status" value="1"/>
</dbReference>
<dbReference type="HAMAP" id="MF_00735">
    <property type="entry name" value="Methyltr_PrmA"/>
    <property type="match status" value="1"/>
</dbReference>
<dbReference type="InterPro" id="IPR050078">
    <property type="entry name" value="Ribosomal_L11_MeTrfase_PrmA"/>
</dbReference>
<dbReference type="InterPro" id="IPR004498">
    <property type="entry name" value="Ribosomal_PrmA_MeTrfase"/>
</dbReference>
<dbReference type="InterPro" id="IPR029063">
    <property type="entry name" value="SAM-dependent_MTases_sf"/>
</dbReference>
<dbReference type="NCBIfam" id="TIGR00406">
    <property type="entry name" value="prmA"/>
    <property type="match status" value="1"/>
</dbReference>
<dbReference type="PANTHER" id="PTHR43648">
    <property type="entry name" value="ELECTRON TRANSFER FLAVOPROTEIN BETA SUBUNIT LYSINE METHYLTRANSFERASE"/>
    <property type="match status" value="1"/>
</dbReference>
<dbReference type="PANTHER" id="PTHR43648:SF1">
    <property type="entry name" value="ELECTRON TRANSFER FLAVOPROTEIN BETA SUBUNIT LYSINE METHYLTRANSFERASE"/>
    <property type="match status" value="1"/>
</dbReference>
<dbReference type="Pfam" id="PF06325">
    <property type="entry name" value="PrmA"/>
    <property type="match status" value="1"/>
</dbReference>
<dbReference type="PIRSF" id="PIRSF000401">
    <property type="entry name" value="RPL11_MTase"/>
    <property type="match status" value="1"/>
</dbReference>
<dbReference type="SUPFAM" id="SSF53335">
    <property type="entry name" value="S-adenosyl-L-methionine-dependent methyltransferases"/>
    <property type="match status" value="1"/>
</dbReference>
<comment type="function">
    <text evidence="1">Methylates ribosomal protein L11.</text>
</comment>
<comment type="catalytic activity">
    <reaction evidence="1">
        <text>L-lysyl-[protein] + 3 S-adenosyl-L-methionine = N(6),N(6),N(6)-trimethyl-L-lysyl-[protein] + 3 S-adenosyl-L-homocysteine + 3 H(+)</text>
        <dbReference type="Rhea" id="RHEA:54192"/>
        <dbReference type="Rhea" id="RHEA-COMP:9752"/>
        <dbReference type="Rhea" id="RHEA-COMP:13826"/>
        <dbReference type="ChEBI" id="CHEBI:15378"/>
        <dbReference type="ChEBI" id="CHEBI:29969"/>
        <dbReference type="ChEBI" id="CHEBI:57856"/>
        <dbReference type="ChEBI" id="CHEBI:59789"/>
        <dbReference type="ChEBI" id="CHEBI:61961"/>
    </reaction>
</comment>
<comment type="subcellular location">
    <subcellularLocation>
        <location evidence="1">Cytoplasm</location>
    </subcellularLocation>
</comment>
<comment type="similarity">
    <text evidence="1">Belongs to the methyltransferase superfamily. PrmA family.</text>
</comment>
<name>PRMA_PROM9</name>
<feature type="chain" id="PRO_1000046060" description="Ribosomal protein L11 methyltransferase">
    <location>
        <begin position="1"/>
        <end position="303"/>
    </location>
</feature>
<feature type="binding site" evidence="1">
    <location>
        <position position="144"/>
    </location>
    <ligand>
        <name>S-adenosyl-L-methionine</name>
        <dbReference type="ChEBI" id="CHEBI:59789"/>
    </ligand>
</feature>
<feature type="binding site" evidence="1">
    <location>
        <position position="165"/>
    </location>
    <ligand>
        <name>S-adenosyl-L-methionine</name>
        <dbReference type="ChEBI" id="CHEBI:59789"/>
    </ligand>
</feature>
<feature type="binding site" evidence="1">
    <location>
        <position position="187"/>
    </location>
    <ligand>
        <name>S-adenosyl-L-methionine</name>
        <dbReference type="ChEBI" id="CHEBI:59789"/>
    </ligand>
</feature>
<feature type="binding site" evidence="1">
    <location>
        <position position="235"/>
    </location>
    <ligand>
        <name>S-adenosyl-L-methionine</name>
        <dbReference type="ChEBI" id="CHEBI:59789"/>
    </ligand>
</feature>
<gene>
    <name evidence="1" type="primary">prmA</name>
    <name type="ordered locus">PMT9312_1451</name>
</gene>
<sequence length="303" mass="34946">MASKDWYKLNFQIESDLEEIIIWKLNELGIFSFSFEYLIKTENKKEVNIWLPINEWDESSRSDFEKIICKLLNINDSINKFFDWSVIKEEDWLTSWKKYWAPELVGNHFLILPCWINLNEEFNDKQIIKIDPGAAFGTGSHPSTYLCLEKMEKILLSDKKVLDIGSGSGILSIAARLLGAKEVCAIDNDYLAINSTNSNFQLNFGNLNNLNTYLGSFNEVILKHQLKKIDFVVCNILAEVIKEMIPNIYKCLRNNGEVIFSGILNSQKDEIIKILIQNNLKLLDVSSRKDWACIYAQKAKNLT</sequence>